<comment type="function">
    <text evidence="1">ATP-dependent specificity component of the Clp protease. It directs the protease to specific substrates. Can perform chaperone functions in the absence of ClpP.</text>
</comment>
<comment type="subunit">
    <text evidence="1">Component of the ClpX-ClpP complex. Forms a hexameric ring that, in the presence of ATP, binds to fourteen ClpP subunits assembled into a disk-like structure with a central cavity, resembling the structure of eukaryotic proteasomes.</text>
</comment>
<comment type="similarity">
    <text evidence="1">Belongs to the ClpX chaperone family.</text>
</comment>
<protein>
    <recommendedName>
        <fullName evidence="1">ATP-dependent Clp protease ATP-binding subunit ClpX</fullName>
    </recommendedName>
</protein>
<proteinExistence type="inferred from homology"/>
<name>CLPX_COXB2</name>
<reference key="1">
    <citation type="journal article" date="2009" name="Infect. Immun.">
        <title>Comparative genomics reveal extensive transposon-mediated genomic plasticity and diversity among potential effector proteins within the genus Coxiella.</title>
        <authorList>
            <person name="Beare P.A."/>
            <person name="Unsworth N."/>
            <person name="Andoh M."/>
            <person name="Voth D.E."/>
            <person name="Omsland A."/>
            <person name="Gilk S.D."/>
            <person name="Williams K.P."/>
            <person name="Sobral B.W."/>
            <person name="Kupko J.J. III"/>
            <person name="Porcella S.F."/>
            <person name="Samuel J.E."/>
            <person name="Heinzen R.A."/>
        </authorList>
    </citation>
    <scope>NUCLEOTIDE SEQUENCE [LARGE SCALE GENOMIC DNA]</scope>
    <source>
        <strain>CbuG_Q212</strain>
    </source>
</reference>
<feature type="chain" id="PRO_1000097945" description="ATP-dependent Clp protease ATP-binding subunit ClpX">
    <location>
        <begin position="1"/>
        <end position="422"/>
    </location>
</feature>
<feature type="domain" description="ClpX-type ZB" evidence="2">
    <location>
        <begin position="1"/>
        <end position="53"/>
    </location>
</feature>
<feature type="binding site" evidence="2">
    <location>
        <position position="12"/>
    </location>
    <ligand>
        <name>Zn(2+)</name>
        <dbReference type="ChEBI" id="CHEBI:29105"/>
    </ligand>
</feature>
<feature type="binding site" evidence="2">
    <location>
        <position position="15"/>
    </location>
    <ligand>
        <name>Zn(2+)</name>
        <dbReference type="ChEBI" id="CHEBI:29105"/>
    </ligand>
</feature>
<feature type="binding site" evidence="2">
    <location>
        <position position="34"/>
    </location>
    <ligand>
        <name>Zn(2+)</name>
        <dbReference type="ChEBI" id="CHEBI:29105"/>
    </ligand>
</feature>
<feature type="binding site" evidence="2">
    <location>
        <position position="37"/>
    </location>
    <ligand>
        <name>Zn(2+)</name>
        <dbReference type="ChEBI" id="CHEBI:29105"/>
    </ligand>
</feature>
<feature type="binding site" evidence="1">
    <location>
        <begin position="116"/>
        <end position="123"/>
    </location>
    <ligand>
        <name>ATP</name>
        <dbReference type="ChEBI" id="CHEBI:30616"/>
    </ligand>
</feature>
<organism>
    <name type="scientific">Coxiella burnetii (strain CbuG_Q212)</name>
    <name type="common">Coxiella burnetii (strain Q212)</name>
    <dbReference type="NCBI Taxonomy" id="434923"/>
    <lineage>
        <taxon>Bacteria</taxon>
        <taxon>Pseudomonadati</taxon>
        <taxon>Pseudomonadota</taxon>
        <taxon>Gammaproteobacteria</taxon>
        <taxon>Legionellales</taxon>
        <taxon>Coxiellaceae</taxon>
        <taxon>Coxiella</taxon>
    </lineage>
</organism>
<gene>
    <name evidence="1" type="primary">clpX</name>
    <name type="ordered locus">CbuG_1264</name>
</gene>
<dbReference type="EMBL" id="CP001019">
    <property type="protein sequence ID" value="ACJ18587.1"/>
    <property type="molecule type" value="Genomic_DNA"/>
</dbReference>
<dbReference type="RefSeq" id="WP_005771771.1">
    <property type="nucleotide sequence ID" value="NC_011527.1"/>
</dbReference>
<dbReference type="SMR" id="B6J0V9"/>
<dbReference type="KEGG" id="cbg:CbuG_1264"/>
<dbReference type="HOGENOM" id="CLU_014218_8_2_6"/>
<dbReference type="GO" id="GO:0009376">
    <property type="term" value="C:HslUV protease complex"/>
    <property type="evidence" value="ECO:0007669"/>
    <property type="project" value="TreeGrafter"/>
</dbReference>
<dbReference type="GO" id="GO:0005524">
    <property type="term" value="F:ATP binding"/>
    <property type="evidence" value="ECO:0007669"/>
    <property type="project" value="UniProtKB-UniRule"/>
</dbReference>
<dbReference type="GO" id="GO:0016887">
    <property type="term" value="F:ATP hydrolysis activity"/>
    <property type="evidence" value="ECO:0007669"/>
    <property type="project" value="InterPro"/>
</dbReference>
<dbReference type="GO" id="GO:0140662">
    <property type="term" value="F:ATP-dependent protein folding chaperone"/>
    <property type="evidence" value="ECO:0007669"/>
    <property type="project" value="InterPro"/>
</dbReference>
<dbReference type="GO" id="GO:0046983">
    <property type="term" value="F:protein dimerization activity"/>
    <property type="evidence" value="ECO:0007669"/>
    <property type="project" value="InterPro"/>
</dbReference>
<dbReference type="GO" id="GO:0051082">
    <property type="term" value="F:unfolded protein binding"/>
    <property type="evidence" value="ECO:0007669"/>
    <property type="project" value="UniProtKB-UniRule"/>
</dbReference>
<dbReference type="GO" id="GO:0008270">
    <property type="term" value="F:zinc ion binding"/>
    <property type="evidence" value="ECO:0007669"/>
    <property type="project" value="InterPro"/>
</dbReference>
<dbReference type="GO" id="GO:0051301">
    <property type="term" value="P:cell division"/>
    <property type="evidence" value="ECO:0007669"/>
    <property type="project" value="TreeGrafter"/>
</dbReference>
<dbReference type="GO" id="GO:0051603">
    <property type="term" value="P:proteolysis involved in protein catabolic process"/>
    <property type="evidence" value="ECO:0007669"/>
    <property type="project" value="TreeGrafter"/>
</dbReference>
<dbReference type="CDD" id="cd19497">
    <property type="entry name" value="RecA-like_ClpX"/>
    <property type="match status" value="1"/>
</dbReference>
<dbReference type="FunFam" id="1.10.8.60:FF:000002">
    <property type="entry name" value="ATP-dependent Clp protease ATP-binding subunit ClpX"/>
    <property type="match status" value="1"/>
</dbReference>
<dbReference type="FunFam" id="3.40.50.300:FF:000005">
    <property type="entry name" value="ATP-dependent Clp protease ATP-binding subunit ClpX"/>
    <property type="match status" value="1"/>
</dbReference>
<dbReference type="Gene3D" id="1.10.8.60">
    <property type="match status" value="1"/>
</dbReference>
<dbReference type="Gene3D" id="6.20.220.10">
    <property type="entry name" value="ClpX chaperone, C4-type zinc finger domain"/>
    <property type="match status" value="1"/>
</dbReference>
<dbReference type="Gene3D" id="3.40.50.300">
    <property type="entry name" value="P-loop containing nucleotide triphosphate hydrolases"/>
    <property type="match status" value="1"/>
</dbReference>
<dbReference type="HAMAP" id="MF_00175">
    <property type="entry name" value="ClpX"/>
    <property type="match status" value="1"/>
</dbReference>
<dbReference type="InterPro" id="IPR003593">
    <property type="entry name" value="AAA+_ATPase"/>
</dbReference>
<dbReference type="InterPro" id="IPR050052">
    <property type="entry name" value="ATP-dep_Clp_protease_ClpX"/>
</dbReference>
<dbReference type="InterPro" id="IPR003959">
    <property type="entry name" value="ATPase_AAA_core"/>
</dbReference>
<dbReference type="InterPro" id="IPR019489">
    <property type="entry name" value="Clp_ATPase_C"/>
</dbReference>
<dbReference type="InterPro" id="IPR004487">
    <property type="entry name" value="Clp_protease_ATP-bd_su_ClpX"/>
</dbReference>
<dbReference type="InterPro" id="IPR046425">
    <property type="entry name" value="ClpX_bact"/>
</dbReference>
<dbReference type="InterPro" id="IPR027417">
    <property type="entry name" value="P-loop_NTPase"/>
</dbReference>
<dbReference type="InterPro" id="IPR010603">
    <property type="entry name" value="Znf_CppX_C4"/>
</dbReference>
<dbReference type="InterPro" id="IPR038366">
    <property type="entry name" value="Znf_CppX_C4_sf"/>
</dbReference>
<dbReference type="NCBIfam" id="TIGR00382">
    <property type="entry name" value="clpX"/>
    <property type="match status" value="1"/>
</dbReference>
<dbReference type="NCBIfam" id="NF003745">
    <property type="entry name" value="PRK05342.1"/>
    <property type="match status" value="1"/>
</dbReference>
<dbReference type="PANTHER" id="PTHR48102:SF7">
    <property type="entry name" value="ATP-DEPENDENT CLP PROTEASE ATP-BINDING SUBUNIT CLPX-LIKE, MITOCHONDRIAL"/>
    <property type="match status" value="1"/>
</dbReference>
<dbReference type="PANTHER" id="PTHR48102">
    <property type="entry name" value="ATP-DEPENDENT CLP PROTEASE ATP-BINDING SUBUNIT CLPX-LIKE, MITOCHONDRIAL-RELATED"/>
    <property type="match status" value="1"/>
</dbReference>
<dbReference type="Pfam" id="PF07724">
    <property type="entry name" value="AAA_2"/>
    <property type="match status" value="1"/>
</dbReference>
<dbReference type="Pfam" id="PF10431">
    <property type="entry name" value="ClpB_D2-small"/>
    <property type="match status" value="1"/>
</dbReference>
<dbReference type="Pfam" id="PF06689">
    <property type="entry name" value="zf-C4_ClpX"/>
    <property type="match status" value="1"/>
</dbReference>
<dbReference type="SMART" id="SM00382">
    <property type="entry name" value="AAA"/>
    <property type="match status" value="1"/>
</dbReference>
<dbReference type="SMART" id="SM01086">
    <property type="entry name" value="ClpB_D2-small"/>
    <property type="match status" value="1"/>
</dbReference>
<dbReference type="SMART" id="SM00994">
    <property type="entry name" value="zf-C4_ClpX"/>
    <property type="match status" value="1"/>
</dbReference>
<dbReference type="SUPFAM" id="SSF57716">
    <property type="entry name" value="Glucocorticoid receptor-like (DNA-binding domain)"/>
    <property type="match status" value="1"/>
</dbReference>
<dbReference type="SUPFAM" id="SSF52540">
    <property type="entry name" value="P-loop containing nucleoside triphosphate hydrolases"/>
    <property type="match status" value="1"/>
</dbReference>
<dbReference type="PROSITE" id="PS51902">
    <property type="entry name" value="CLPX_ZB"/>
    <property type="match status" value="1"/>
</dbReference>
<evidence type="ECO:0000255" key="1">
    <source>
        <dbReference type="HAMAP-Rule" id="MF_00175"/>
    </source>
</evidence>
<evidence type="ECO:0000255" key="2">
    <source>
        <dbReference type="PROSITE-ProRule" id="PRU01250"/>
    </source>
</evidence>
<keyword id="KW-0067">ATP-binding</keyword>
<keyword id="KW-0143">Chaperone</keyword>
<keyword id="KW-0479">Metal-binding</keyword>
<keyword id="KW-0547">Nucleotide-binding</keyword>
<keyword id="KW-0862">Zinc</keyword>
<sequence>MSSDEKLQILYCSFCGKSQHQVRKLIAGPAVFVCNECVDLCNDIIREEEIAQAGGAQKKLPTPPEIHRMLDEYVIGQEFAKKVLSVAVYNHYKRLGNQTKKDSVEISKSNILLIGPTGSGKTLLAQTLAKILDVPFAIADATTLTEAGYVGEDVENIIQKLLQKCNYDVEKAKTGIIYIDEIDKIARKTDSPSLTRDVSGEGVQQALLKLIEGTVASIPPQGGRKHPQQEYLQVDTSNILFICGGAFADLHKIIQRRTDKSGIGFAAEVRPKEDFSREASKLIKQTEPGDLIKYGLIPEFVGRLPIITTLEELDEDALMRILTEPKNALVKQYRKLFEFEGVEIDFREDALKAIAKRAIQQKTGARGLRSIVEHTLLDLMYDLPGVAAGLRKVVIDSGVIDQASPPIFIYHHEKASRKVAQE</sequence>
<accession>B6J0V9</accession>